<feature type="chain" id="PRO_1000086083" description="Small ribosomal subunit protein uS3">
    <location>
        <begin position="1"/>
        <end position="235"/>
    </location>
</feature>
<feature type="domain" description="KH type-2" evidence="1">
    <location>
        <begin position="39"/>
        <end position="107"/>
    </location>
</feature>
<gene>
    <name evidence="1" type="primary">rpsC</name>
    <name type="ordered locus">Asuc_0465</name>
</gene>
<comment type="function">
    <text evidence="1">Binds the lower part of the 30S subunit head. Binds mRNA in the 70S ribosome, positioning it for translation.</text>
</comment>
<comment type="subunit">
    <text evidence="1">Part of the 30S ribosomal subunit. Forms a tight complex with proteins S10 and S14.</text>
</comment>
<comment type="similarity">
    <text evidence="1">Belongs to the universal ribosomal protein uS3 family.</text>
</comment>
<proteinExistence type="inferred from homology"/>
<protein>
    <recommendedName>
        <fullName evidence="1">Small ribosomal subunit protein uS3</fullName>
    </recommendedName>
    <alternativeName>
        <fullName evidence="2">30S ribosomal protein S3</fullName>
    </alternativeName>
</protein>
<name>RS3_ACTSZ</name>
<evidence type="ECO:0000255" key="1">
    <source>
        <dbReference type="HAMAP-Rule" id="MF_01309"/>
    </source>
</evidence>
<evidence type="ECO:0000305" key="2"/>
<organism>
    <name type="scientific">Actinobacillus succinogenes (strain ATCC 55618 / DSM 22257 / CCUG 43843 / 130Z)</name>
    <dbReference type="NCBI Taxonomy" id="339671"/>
    <lineage>
        <taxon>Bacteria</taxon>
        <taxon>Pseudomonadati</taxon>
        <taxon>Pseudomonadota</taxon>
        <taxon>Gammaproteobacteria</taxon>
        <taxon>Pasteurellales</taxon>
        <taxon>Pasteurellaceae</taxon>
        <taxon>Actinobacillus</taxon>
    </lineage>
</organism>
<sequence length="235" mass="25903">MGQKVHPHGIRLGIVKPWSSTWFANTQDFADNLDGDFKVRKFLNKELMNASVSRITIERPAKSIRVTIHTARPGIVIGKKGEDVEKLRTAVAKIAGVPAQINIAEVKKPELDAKLVADSIASQLERRVMFRRAMKRAVQNAMRLGAKGIKVEVSGRLGGAEIARSEWYREGRVPLHTLRADIDYNTAEAHTTYGVIGVKVWIFKGEILGGMAAIAQQPEQQPAAPKKAPRGKGRK</sequence>
<reference key="1">
    <citation type="journal article" date="2010" name="BMC Genomics">
        <title>A genomic perspective on the potential of Actinobacillus succinogenes for industrial succinate production.</title>
        <authorList>
            <person name="McKinlay J.B."/>
            <person name="Laivenieks M."/>
            <person name="Schindler B.D."/>
            <person name="McKinlay A.A."/>
            <person name="Siddaramappa S."/>
            <person name="Challacombe J.F."/>
            <person name="Lowry S.R."/>
            <person name="Clum A."/>
            <person name="Lapidus A.L."/>
            <person name="Burkhart K.B."/>
            <person name="Harkins V."/>
            <person name="Vieille C."/>
        </authorList>
    </citation>
    <scope>NUCLEOTIDE SEQUENCE [LARGE SCALE GENOMIC DNA]</scope>
    <source>
        <strain>ATCC 55618 / DSM 22257 / CCUG 43843 / 130Z</strain>
    </source>
</reference>
<accession>A6VLJ4</accession>
<dbReference type="EMBL" id="CP000746">
    <property type="protein sequence ID" value="ABR73841.1"/>
    <property type="molecule type" value="Genomic_DNA"/>
</dbReference>
<dbReference type="RefSeq" id="WP_012072224.1">
    <property type="nucleotide sequence ID" value="NC_009655.1"/>
</dbReference>
<dbReference type="SMR" id="A6VLJ4"/>
<dbReference type="STRING" id="339671.Asuc_0465"/>
<dbReference type="KEGG" id="asu:Asuc_0465"/>
<dbReference type="eggNOG" id="COG0092">
    <property type="taxonomic scope" value="Bacteria"/>
</dbReference>
<dbReference type="HOGENOM" id="CLU_058591_0_2_6"/>
<dbReference type="OrthoDB" id="9806396at2"/>
<dbReference type="Proteomes" id="UP000001114">
    <property type="component" value="Chromosome"/>
</dbReference>
<dbReference type="GO" id="GO:0022627">
    <property type="term" value="C:cytosolic small ribosomal subunit"/>
    <property type="evidence" value="ECO:0007669"/>
    <property type="project" value="TreeGrafter"/>
</dbReference>
<dbReference type="GO" id="GO:0003729">
    <property type="term" value="F:mRNA binding"/>
    <property type="evidence" value="ECO:0007669"/>
    <property type="project" value="UniProtKB-UniRule"/>
</dbReference>
<dbReference type="GO" id="GO:0019843">
    <property type="term" value="F:rRNA binding"/>
    <property type="evidence" value="ECO:0007669"/>
    <property type="project" value="UniProtKB-UniRule"/>
</dbReference>
<dbReference type="GO" id="GO:0003735">
    <property type="term" value="F:structural constituent of ribosome"/>
    <property type="evidence" value="ECO:0007669"/>
    <property type="project" value="InterPro"/>
</dbReference>
<dbReference type="GO" id="GO:0006412">
    <property type="term" value="P:translation"/>
    <property type="evidence" value="ECO:0007669"/>
    <property type="project" value="UniProtKB-UniRule"/>
</dbReference>
<dbReference type="CDD" id="cd02412">
    <property type="entry name" value="KH-II_30S_S3"/>
    <property type="match status" value="1"/>
</dbReference>
<dbReference type="FunFam" id="3.30.1140.32:FF:000001">
    <property type="entry name" value="30S ribosomal protein S3"/>
    <property type="match status" value="1"/>
</dbReference>
<dbReference type="FunFam" id="3.30.300.20:FF:000001">
    <property type="entry name" value="30S ribosomal protein S3"/>
    <property type="match status" value="1"/>
</dbReference>
<dbReference type="Gene3D" id="3.30.300.20">
    <property type="match status" value="1"/>
</dbReference>
<dbReference type="Gene3D" id="3.30.1140.32">
    <property type="entry name" value="Ribosomal protein S3, C-terminal domain"/>
    <property type="match status" value="1"/>
</dbReference>
<dbReference type="HAMAP" id="MF_01309_B">
    <property type="entry name" value="Ribosomal_uS3_B"/>
    <property type="match status" value="1"/>
</dbReference>
<dbReference type="InterPro" id="IPR004087">
    <property type="entry name" value="KH_dom"/>
</dbReference>
<dbReference type="InterPro" id="IPR015946">
    <property type="entry name" value="KH_dom-like_a/b"/>
</dbReference>
<dbReference type="InterPro" id="IPR004044">
    <property type="entry name" value="KH_dom_type_2"/>
</dbReference>
<dbReference type="InterPro" id="IPR009019">
    <property type="entry name" value="KH_sf_prok-type"/>
</dbReference>
<dbReference type="InterPro" id="IPR036419">
    <property type="entry name" value="Ribosomal_S3_C_sf"/>
</dbReference>
<dbReference type="InterPro" id="IPR005704">
    <property type="entry name" value="Ribosomal_uS3_bac-typ"/>
</dbReference>
<dbReference type="InterPro" id="IPR001351">
    <property type="entry name" value="Ribosomal_uS3_C"/>
</dbReference>
<dbReference type="InterPro" id="IPR018280">
    <property type="entry name" value="Ribosomal_uS3_CS"/>
</dbReference>
<dbReference type="NCBIfam" id="TIGR01009">
    <property type="entry name" value="rpsC_bact"/>
    <property type="match status" value="1"/>
</dbReference>
<dbReference type="PANTHER" id="PTHR11760">
    <property type="entry name" value="30S/40S RIBOSOMAL PROTEIN S3"/>
    <property type="match status" value="1"/>
</dbReference>
<dbReference type="PANTHER" id="PTHR11760:SF19">
    <property type="entry name" value="SMALL RIBOSOMAL SUBUNIT PROTEIN US3C"/>
    <property type="match status" value="1"/>
</dbReference>
<dbReference type="Pfam" id="PF07650">
    <property type="entry name" value="KH_2"/>
    <property type="match status" value="1"/>
</dbReference>
<dbReference type="Pfam" id="PF00189">
    <property type="entry name" value="Ribosomal_S3_C"/>
    <property type="match status" value="1"/>
</dbReference>
<dbReference type="SMART" id="SM00322">
    <property type="entry name" value="KH"/>
    <property type="match status" value="1"/>
</dbReference>
<dbReference type="SUPFAM" id="SSF54814">
    <property type="entry name" value="Prokaryotic type KH domain (KH-domain type II)"/>
    <property type="match status" value="1"/>
</dbReference>
<dbReference type="SUPFAM" id="SSF54821">
    <property type="entry name" value="Ribosomal protein S3 C-terminal domain"/>
    <property type="match status" value="1"/>
</dbReference>
<dbReference type="PROSITE" id="PS50823">
    <property type="entry name" value="KH_TYPE_2"/>
    <property type="match status" value="1"/>
</dbReference>
<dbReference type="PROSITE" id="PS00548">
    <property type="entry name" value="RIBOSOMAL_S3"/>
    <property type="match status" value="1"/>
</dbReference>
<keyword id="KW-1185">Reference proteome</keyword>
<keyword id="KW-0687">Ribonucleoprotein</keyword>
<keyword id="KW-0689">Ribosomal protein</keyword>
<keyword id="KW-0694">RNA-binding</keyword>
<keyword id="KW-0699">rRNA-binding</keyword>